<dbReference type="EMBL" id="EF186024">
    <property type="protein sequence ID" value="ABM60755.1"/>
    <property type="molecule type" value="mRNA"/>
</dbReference>
<dbReference type="EMBL" id="AK097146">
    <property type="protein sequence ID" value="BAC04964.1"/>
    <property type="molecule type" value="mRNA"/>
</dbReference>
<dbReference type="EMBL" id="AL355852">
    <property type="status" value="NOT_ANNOTATED_CDS"/>
    <property type="molecule type" value="Genomic_DNA"/>
</dbReference>
<dbReference type="CCDS" id="CCDS14377.2">
    <molecule id="Q5JTC6-1"/>
</dbReference>
<dbReference type="RefSeq" id="NP_689637.3">
    <molecule id="Q5JTC6-1"/>
    <property type="nucleotide sequence ID" value="NM_152424.4"/>
</dbReference>
<dbReference type="PDB" id="4YJE">
    <property type="method" value="X-ray"/>
    <property type="resolution" value="1.90 A"/>
    <property type="chains" value="B=325-335"/>
</dbReference>
<dbReference type="PDB" id="4YJL">
    <property type="method" value="X-ray"/>
    <property type="resolution" value="2.10 A"/>
    <property type="chains" value="G/H/I/J/K/L=496-508"/>
</dbReference>
<dbReference type="PDB" id="4YK6">
    <property type="method" value="X-ray"/>
    <property type="resolution" value="1.70 A"/>
    <property type="chains" value="B=365-375"/>
</dbReference>
<dbReference type="PDBsum" id="4YJE"/>
<dbReference type="PDBsum" id="4YJL"/>
<dbReference type="PDBsum" id="4YK6"/>
<dbReference type="SMR" id="Q5JTC6"/>
<dbReference type="BioGRID" id="126556">
    <property type="interactions" value="60"/>
</dbReference>
<dbReference type="ELM" id="Q5JTC6"/>
<dbReference type="FunCoup" id="Q5JTC6">
    <property type="interactions" value="2492"/>
</dbReference>
<dbReference type="IntAct" id="Q5JTC6">
    <property type="interactions" value="42"/>
</dbReference>
<dbReference type="MINT" id="Q5JTC6"/>
<dbReference type="STRING" id="9606.ENSP00000364003"/>
<dbReference type="GlyGen" id="Q5JTC6">
    <property type="glycosylation" value="2 sites"/>
</dbReference>
<dbReference type="iPTMnet" id="Q5JTC6"/>
<dbReference type="PhosphoSitePlus" id="Q5JTC6"/>
<dbReference type="BioMuta" id="AMER1"/>
<dbReference type="DMDM" id="142984753"/>
<dbReference type="jPOST" id="Q5JTC6"/>
<dbReference type="MassIVE" id="Q5JTC6"/>
<dbReference type="PaxDb" id="9606-ENSP00000329117"/>
<dbReference type="PeptideAtlas" id="Q5JTC6"/>
<dbReference type="ProteomicsDB" id="63211">
    <molecule id="Q5JTC6-1"/>
</dbReference>
<dbReference type="ProteomicsDB" id="63212">
    <molecule id="Q5JTC6-2"/>
</dbReference>
<dbReference type="Pumba" id="Q5JTC6"/>
<dbReference type="Antibodypedia" id="43710">
    <property type="antibodies" value="99 antibodies from 28 providers"/>
</dbReference>
<dbReference type="DNASU" id="139285"/>
<dbReference type="Ensembl" id="ENST00000374869.8">
    <molecule id="Q5JTC6-1"/>
    <property type="protein sequence ID" value="ENSP00000364003.4"/>
    <property type="gene ID" value="ENSG00000184675.11"/>
</dbReference>
<dbReference type="GeneID" id="139285"/>
<dbReference type="KEGG" id="hsa:139285"/>
<dbReference type="MANE-Select" id="ENST00000374869.8">
    <property type="protein sequence ID" value="ENSP00000364003.4"/>
    <property type="RefSeq nucleotide sequence ID" value="NM_152424.4"/>
    <property type="RefSeq protein sequence ID" value="NP_689637.3"/>
</dbReference>
<dbReference type="UCSC" id="uc004dvo.3">
    <molecule id="Q5JTC6-1"/>
    <property type="organism name" value="human"/>
</dbReference>
<dbReference type="AGR" id="HGNC:26837"/>
<dbReference type="CTD" id="139285"/>
<dbReference type="DisGeNET" id="139285"/>
<dbReference type="GeneCards" id="AMER1"/>
<dbReference type="GeneReviews" id="AMER1"/>
<dbReference type="HGNC" id="HGNC:26837">
    <property type="gene designation" value="AMER1"/>
</dbReference>
<dbReference type="HPA" id="ENSG00000184675">
    <property type="expression patterns" value="Tissue enhanced (tongue)"/>
</dbReference>
<dbReference type="MalaCards" id="AMER1"/>
<dbReference type="MIM" id="300373">
    <property type="type" value="phenotype"/>
</dbReference>
<dbReference type="MIM" id="300647">
    <property type="type" value="gene"/>
</dbReference>
<dbReference type="neXtProt" id="NX_Q5JTC6"/>
<dbReference type="OpenTargets" id="ENSG00000184675"/>
<dbReference type="Orphanet" id="2780">
    <property type="disease" value="Osteopathia striata-cranial sclerosis syndrome"/>
</dbReference>
<dbReference type="PharmGKB" id="PA145148904"/>
<dbReference type="VEuPathDB" id="HostDB:ENSG00000184675"/>
<dbReference type="eggNOG" id="ENOG502QT5W">
    <property type="taxonomic scope" value="Eukaryota"/>
</dbReference>
<dbReference type="GeneTree" id="ENSGT00530000063529"/>
<dbReference type="HOGENOM" id="CLU_009351_2_0_1"/>
<dbReference type="InParanoid" id="Q5JTC6"/>
<dbReference type="OMA" id="WRDFPGT"/>
<dbReference type="OrthoDB" id="9898564at2759"/>
<dbReference type="PAN-GO" id="Q5JTC6">
    <property type="GO annotations" value="4 GO annotations based on evolutionary models"/>
</dbReference>
<dbReference type="PhylomeDB" id="Q5JTC6"/>
<dbReference type="TreeFam" id="TF333006"/>
<dbReference type="PathwayCommons" id="Q5JTC6"/>
<dbReference type="Reactome" id="R-HSA-195253">
    <property type="pathway name" value="Degradation of beta-catenin by the destruction complex"/>
</dbReference>
<dbReference type="Reactome" id="R-HSA-196299">
    <property type="pathway name" value="Beta-catenin phosphorylation cascade"/>
</dbReference>
<dbReference type="Reactome" id="R-HSA-4641262">
    <property type="pathway name" value="Disassembly of the destruction complex and recruitment of AXIN to the membrane"/>
</dbReference>
<dbReference type="Reactome" id="R-HSA-5339716">
    <property type="pathway name" value="Signaling by GSK3beta mutants"/>
</dbReference>
<dbReference type="Reactome" id="R-HSA-5358747">
    <property type="pathway name" value="CTNNB1 S33 mutants aren't phosphorylated"/>
</dbReference>
<dbReference type="Reactome" id="R-HSA-5358749">
    <property type="pathway name" value="CTNNB1 S37 mutants aren't phosphorylated"/>
</dbReference>
<dbReference type="Reactome" id="R-HSA-5358751">
    <property type="pathway name" value="CTNNB1 S45 mutants aren't phosphorylated"/>
</dbReference>
<dbReference type="Reactome" id="R-HSA-5358752">
    <property type="pathway name" value="CTNNB1 T41 mutants aren't phosphorylated"/>
</dbReference>
<dbReference type="Reactome" id="R-HSA-5467337">
    <property type="pathway name" value="APC truncation mutants have impaired AXIN binding"/>
</dbReference>
<dbReference type="Reactome" id="R-HSA-5467340">
    <property type="pathway name" value="AXIN missense mutants destabilize the destruction complex"/>
</dbReference>
<dbReference type="Reactome" id="R-HSA-5467348">
    <property type="pathway name" value="Truncations of AMER1 destabilize the destruction complex"/>
</dbReference>
<dbReference type="Reactome" id="R-HSA-8951664">
    <property type="pathway name" value="Neddylation"/>
</dbReference>
<dbReference type="Reactome" id="R-HSA-9755511">
    <property type="pathway name" value="KEAP1-NFE2L2 pathway"/>
</dbReference>
<dbReference type="SignaLink" id="Q5JTC6"/>
<dbReference type="SIGNOR" id="Q5JTC6"/>
<dbReference type="BioGRID-ORCS" id="139285">
    <property type="hits" value="16 hits in 793 CRISPR screens"/>
</dbReference>
<dbReference type="ChiTaRS" id="AMER1">
    <property type="organism name" value="human"/>
</dbReference>
<dbReference type="EvolutionaryTrace" id="Q5JTC6"/>
<dbReference type="GenomeRNAi" id="139285"/>
<dbReference type="Pharos" id="Q5JTC6">
    <property type="development level" value="Tbio"/>
</dbReference>
<dbReference type="PRO" id="PR:Q5JTC6"/>
<dbReference type="Proteomes" id="UP000005640">
    <property type="component" value="Chromosome X"/>
</dbReference>
<dbReference type="RNAct" id="Q5JTC6">
    <property type="molecule type" value="protein"/>
</dbReference>
<dbReference type="Bgee" id="ENSG00000184675">
    <property type="expression patterns" value="Expressed in cortical plate and 105 other cell types or tissues"/>
</dbReference>
<dbReference type="GO" id="GO:0005829">
    <property type="term" value="C:cytosol"/>
    <property type="evidence" value="ECO:0000304"/>
    <property type="project" value="Reactome"/>
</dbReference>
<dbReference type="GO" id="GO:0043231">
    <property type="term" value="C:intracellular membrane-bounded organelle"/>
    <property type="evidence" value="ECO:0000314"/>
    <property type="project" value="HPA"/>
</dbReference>
<dbReference type="GO" id="GO:0016604">
    <property type="term" value="C:nuclear body"/>
    <property type="evidence" value="ECO:0000314"/>
    <property type="project" value="HPA"/>
</dbReference>
<dbReference type="GO" id="GO:0005886">
    <property type="term" value="C:plasma membrane"/>
    <property type="evidence" value="ECO:0000314"/>
    <property type="project" value="HPA"/>
</dbReference>
<dbReference type="GO" id="GO:0008013">
    <property type="term" value="F:beta-catenin binding"/>
    <property type="evidence" value="ECO:0000314"/>
    <property type="project" value="UniProtKB"/>
</dbReference>
<dbReference type="GO" id="GO:1904713">
    <property type="term" value="F:beta-catenin destruction complex binding"/>
    <property type="evidence" value="ECO:0000353"/>
    <property type="project" value="ParkinsonsUK-UCL"/>
</dbReference>
<dbReference type="GO" id="GO:0005546">
    <property type="term" value="F:phosphatidylinositol-4,5-bisphosphate binding"/>
    <property type="evidence" value="ECO:0000314"/>
    <property type="project" value="UniProtKB"/>
</dbReference>
<dbReference type="GO" id="GO:0060612">
    <property type="term" value="P:adipose tissue development"/>
    <property type="evidence" value="ECO:0007669"/>
    <property type="project" value="Ensembl"/>
</dbReference>
<dbReference type="GO" id="GO:0060348">
    <property type="term" value="P:bone development"/>
    <property type="evidence" value="ECO:0007669"/>
    <property type="project" value="Ensembl"/>
</dbReference>
<dbReference type="GO" id="GO:0072161">
    <property type="term" value="P:mesenchymal cell differentiation involved in kidney development"/>
    <property type="evidence" value="ECO:0007669"/>
    <property type="project" value="Ensembl"/>
</dbReference>
<dbReference type="GO" id="GO:0090090">
    <property type="term" value="P:negative regulation of canonical Wnt signaling pathway"/>
    <property type="evidence" value="ECO:0000315"/>
    <property type="project" value="UniProtKB"/>
</dbReference>
<dbReference type="GO" id="GO:0090263">
    <property type="term" value="P:positive regulation of canonical Wnt signaling pathway"/>
    <property type="evidence" value="ECO:0000315"/>
    <property type="project" value="UniProtKB"/>
</dbReference>
<dbReference type="GO" id="GO:0045732">
    <property type="term" value="P:positive regulation of protein catabolic process"/>
    <property type="evidence" value="ECO:0000314"/>
    <property type="project" value="ParkinsonsUK-UCL"/>
</dbReference>
<dbReference type="GO" id="GO:0031398">
    <property type="term" value="P:positive regulation of protein ubiquitination"/>
    <property type="evidence" value="ECO:0000314"/>
    <property type="project" value="ParkinsonsUK-UCL"/>
</dbReference>
<dbReference type="GO" id="GO:0060828">
    <property type="term" value="P:regulation of canonical Wnt signaling pathway"/>
    <property type="evidence" value="ECO:0000315"/>
    <property type="project" value="UniProtKB"/>
</dbReference>
<dbReference type="GO" id="GO:0016055">
    <property type="term" value="P:Wnt signaling pathway"/>
    <property type="evidence" value="ECO:0007669"/>
    <property type="project" value="UniProtKB-KW"/>
</dbReference>
<dbReference type="InterPro" id="IPR019003">
    <property type="entry name" value="AMER"/>
</dbReference>
<dbReference type="PANTHER" id="PTHR22237:SF0">
    <property type="entry name" value="APC MEMBRANE RECRUITMENT PROTEIN 1"/>
    <property type="match status" value="1"/>
</dbReference>
<dbReference type="PANTHER" id="PTHR22237">
    <property type="entry name" value="APC MEMBRANE RECRUITMENT PROTEIN 2-RELATED"/>
    <property type="match status" value="1"/>
</dbReference>
<dbReference type="Pfam" id="PF09422">
    <property type="entry name" value="AMER"/>
    <property type="match status" value="1"/>
</dbReference>
<feature type="chain" id="PRO_0000281887" description="APC membrane recruitment protein 1">
    <location>
        <begin position="1"/>
        <end position="1135"/>
    </location>
</feature>
<feature type="region of interest" description="Disordered" evidence="1">
    <location>
        <begin position="1"/>
        <end position="115"/>
    </location>
</feature>
<feature type="region of interest" description="Disordered" evidence="1">
    <location>
        <begin position="156"/>
        <end position="308"/>
    </location>
</feature>
<feature type="region of interest" description="Disordered" evidence="1">
    <location>
        <begin position="339"/>
        <end position="405"/>
    </location>
</feature>
<feature type="region of interest" description="Disordered" evidence="1">
    <location>
        <begin position="447"/>
        <end position="484"/>
    </location>
</feature>
<feature type="region of interest" description="Disordered" evidence="1">
    <location>
        <begin position="736"/>
        <end position="764"/>
    </location>
</feature>
<feature type="region of interest" description="Disordered" evidence="1">
    <location>
        <begin position="921"/>
        <end position="948"/>
    </location>
</feature>
<feature type="region of interest" description="Disordered" evidence="1">
    <location>
        <begin position="1007"/>
        <end position="1135"/>
    </location>
</feature>
<feature type="compositionally biased region" description="Low complexity" evidence="1">
    <location>
        <begin position="10"/>
        <end position="19"/>
    </location>
</feature>
<feature type="compositionally biased region" description="Basic and acidic residues" evidence="1">
    <location>
        <begin position="23"/>
        <end position="35"/>
    </location>
</feature>
<feature type="compositionally biased region" description="Low complexity" evidence="1">
    <location>
        <begin position="36"/>
        <end position="50"/>
    </location>
</feature>
<feature type="compositionally biased region" description="Gly residues" evidence="1">
    <location>
        <begin position="73"/>
        <end position="83"/>
    </location>
</feature>
<feature type="compositionally biased region" description="Basic and acidic residues" evidence="1">
    <location>
        <begin position="94"/>
        <end position="107"/>
    </location>
</feature>
<feature type="compositionally biased region" description="Basic and acidic residues" evidence="1">
    <location>
        <begin position="196"/>
        <end position="208"/>
    </location>
</feature>
<feature type="compositionally biased region" description="Pro residues" evidence="1">
    <location>
        <begin position="238"/>
        <end position="248"/>
    </location>
</feature>
<feature type="compositionally biased region" description="Basic and acidic residues" evidence="1">
    <location>
        <begin position="253"/>
        <end position="262"/>
    </location>
</feature>
<feature type="compositionally biased region" description="Basic and acidic residues" evidence="1">
    <location>
        <begin position="282"/>
        <end position="291"/>
    </location>
</feature>
<feature type="compositionally biased region" description="Acidic residues" evidence="1">
    <location>
        <begin position="373"/>
        <end position="405"/>
    </location>
</feature>
<feature type="compositionally biased region" description="Polar residues" evidence="1">
    <location>
        <begin position="455"/>
        <end position="466"/>
    </location>
</feature>
<feature type="compositionally biased region" description="Acidic residues" evidence="1">
    <location>
        <begin position="926"/>
        <end position="938"/>
    </location>
</feature>
<feature type="compositionally biased region" description="Low complexity" evidence="1">
    <location>
        <begin position="1058"/>
        <end position="1069"/>
    </location>
</feature>
<feature type="compositionally biased region" description="Polar residues" evidence="1">
    <location>
        <begin position="1119"/>
        <end position="1135"/>
    </location>
</feature>
<feature type="modified residue" description="N-acetylmethionine" evidence="13">
    <location>
        <position position="1"/>
    </location>
</feature>
<feature type="modified residue" description="Phosphoserine" evidence="12 14">
    <location>
        <position position="246"/>
    </location>
</feature>
<feature type="splice variant" id="VSP_024091" description="In isoform 2." evidence="10">
    <original>MSCSSDSDSSFTQNLPELP</original>
    <variation>IRCPGTEDKRQVTQACGTW</variation>
    <location>
        <begin position="786"/>
        <end position="804"/>
    </location>
</feature>
<feature type="splice variant" id="VSP_024092" description="In isoform 2." evidence="10">
    <location>
        <begin position="805"/>
        <end position="1135"/>
    </location>
</feature>
<feature type="sequence variant" id="VAR_053870" description="In dbSNP:rs34677493.">
    <original>F</original>
    <variation>L</variation>
    <location>
        <position position="159"/>
    </location>
</feature>
<feature type="sequence variant" id="VAR_076268" description="In dbSNP:rs376626895." evidence="9">
    <original>R</original>
    <variation>C</variation>
    <location>
        <position position="178"/>
    </location>
</feature>
<feature type="sequence variant" id="VAR_053871" description="In dbSNP:rs35718712.">
    <original>A</original>
    <variation>S</variation>
    <location>
        <position position="278"/>
    </location>
</feature>
<feature type="sequence variant" id="VAR_031304" description="In dbSNP:rs138948924." evidence="2">
    <original>K</original>
    <variation>N</variation>
    <location>
        <position position="292"/>
    </location>
</feature>
<feature type="mutagenesis site" description="Abolishes interaction with PtdIns(4,5)P2 and cell membrane localization; when associated with A-58; A-79; A-83; A-166; A-181 and A-183." evidence="7">
    <original>K</original>
    <variation>A</variation>
    <location>
        <position position="54"/>
    </location>
</feature>
<feature type="mutagenesis site" description="Abolishes interaction with PtdIns(4,5)P2 and cell membrane localization; when associated with A-54; A-79; A-83; A-166; A-181 and A-183." evidence="7">
    <original>K</original>
    <variation>A</variation>
    <location>
        <position position="58"/>
    </location>
</feature>
<feature type="mutagenesis site" description="Abolishes interaction with PtdIns(4,5)P2 and cell membrane localization; when associated with A-54; A-58; A-83; A-166; A-181 and A-183." evidence="7">
    <original>K</original>
    <variation>A</variation>
    <location>
        <position position="79"/>
    </location>
</feature>
<feature type="mutagenesis site" description="Abolishes interaction with PtdIns(4,5)P2 and cell membrane localization; when associated with A-54; A-58; A-79; A-166; A-181 and A-183." evidence="7">
    <original>K</original>
    <variation>A</variation>
    <location>
        <position position="83"/>
    </location>
</feature>
<feature type="mutagenesis site" description="Abolishes interaction with PtdIns(4,5)P2 and cell membrane localization; when associated with A-54; A-58; A-79; A-83; A-181 and A-183." evidence="7">
    <original>K</original>
    <variation>A</variation>
    <location>
        <position position="166"/>
    </location>
</feature>
<feature type="mutagenesis site" description="Abolishes interaction with PtdIns(4,5)P2 and cell membrane localization; when associated with A-54; A-58; A-79; A-83; A-166 and A-183." evidence="7">
    <original>K</original>
    <variation>A</variation>
    <location>
        <position position="181"/>
    </location>
</feature>
<feature type="mutagenesis site" description="Abolishes interaction with PtdIns(4,5)P2 and cell membrane localization; when associated with A-54; A-58; A-79; A-83; A-166 and A-181." evidence="7">
    <original>K</original>
    <variation>A</variation>
    <location>
        <position position="183"/>
    </location>
</feature>
<feature type="sequence conflict" description="In Ref. 2; BAC04964." evidence="11" ref="2">
    <original>I</original>
    <variation>R</variation>
    <location sequence="Q5JTC6-2">
        <position position="786"/>
    </location>
</feature>
<comment type="function">
    <text evidence="3 4 6 7 8">Regulator of the canonical Wnt signaling pathway. Acts by specifically binding phosphatidylinositol 4,5-bisphosphate (PtdIns(4,5)P2), translocating to the cell membrane and interacting with key regulators of the canonical Wnt signaling pathway, such as components of the beta-catenin destruction complex. Acts both as a positive and negative regulator of the Wnt signaling pathway, depending on the context: acts as a positive regulator by promoting LRP6 phosphorylation. Also acts as a negative regulator by acting as a scaffold protein for the beta-catenin destruction complex and promoting stabilization of Axin at the cell membrane. Promotes CTNNB1 ubiquitination and degradation. Involved in kidney development.</text>
</comment>
<comment type="subunit">
    <text evidence="3 4 6 7 8">Interacts with CTNNB1, AXIN1, LRP6, KEAP1, APC and BTRC. Interacts with SCF (SKP1-CUL1-F-box protein) E3 ubiquitin-protein ligase complexes containing BTRC and/or FBXW11. Identified in the beta-catenin destruction complex containing CTNNB1, APC, AXIN1 and AXIN2. Interacts with WT1.</text>
</comment>
<comment type="interaction">
    <interactant intactId="EBI-6169747">
        <id>Q5JTC6</id>
    </interactant>
    <interactant intactId="EBI-8869590">
        <id>Q8N944</id>
        <label>AMER3</label>
    </interactant>
    <organismsDiffer>false</organismsDiffer>
    <experiments>4</experiments>
</comment>
<comment type="interaction">
    <interactant intactId="EBI-6169747">
        <id>Q5JTC6</id>
    </interactant>
    <interactant intactId="EBI-727707">
        <id>P25054</id>
        <label>APC</label>
    </interactant>
    <organismsDiffer>false</organismsDiffer>
    <experiments>4</experiments>
</comment>
<comment type="interaction">
    <interactant intactId="EBI-6169747">
        <id>Q5JTC6</id>
    </interactant>
    <interactant intactId="EBI-710484">
        <id>O15169</id>
        <label>AXIN1</label>
    </interactant>
    <organismsDiffer>false</organismsDiffer>
    <experiments>7</experiments>
</comment>
<comment type="interaction">
    <interactant intactId="EBI-6169747">
        <id>Q5JTC6</id>
    </interactant>
    <interactant intactId="EBI-307461">
        <id>Q9Y297</id>
        <label>BTRC</label>
    </interactant>
    <organismsDiffer>false</organismsDiffer>
    <experiments>7</experiments>
</comment>
<comment type="interaction">
    <interactant intactId="EBI-6169747">
        <id>Q5JTC6</id>
    </interactant>
    <interactant intactId="EBI-491549">
        <id>P35222</id>
        <label>CTNNB1</label>
    </interactant>
    <organismsDiffer>false</organismsDiffer>
    <experiments>9</experiments>
</comment>
<comment type="interaction">
    <interactant intactId="EBI-6169747">
        <id>Q5JTC6</id>
    </interactant>
    <interactant intactId="EBI-355189">
        <id>Q9UKB1</id>
        <label>FBXW11</label>
    </interactant>
    <organismsDiffer>false</organismsDiffer>
    <experiments>5</experiments>
</comment>
<comment type="interaction">
    <interactant intactId="EBI-6169747">
        <id>Q5JTC6</id>
    </interactant>
    <interactant intactId="EBI-751001">
        <id>Q14145</id>
        <label>KEAP1</label>
    </interactant>
    <organismsDiffer>false</organismsDiffer>
    <experiments>2</experiments>
</comment>
<comment type="subcellular location">
    <subcellularLocation>
        <location>Cytoplasm</location>
    </subcellularLocation>
    <subcellularLocation>
        <location>Cell membrane</location>
        <topology>Peripheral membrane protein</topology>
        <orientation>Cytoplasmic side</orientation>
    </subcellularLocation>
    <subcellularLocation>
        <location>Nucleus</location>
    </subcellularLocation>
    <text>Shuttles between nucleus and cytoplasm. Detected in nuclear paraspeckles that are found close to splicing speckles. Translocates to the cell membrane following binding to PtdIns(4,5)P2.</text>
</comment>
<comment type="alternative products">
    <event type="alternative splicing"/>
    <isoform>
        <id>Q5JTC6-1</id>
        <name>1</name>
        <name>Amer1-S1</name>
        <sequence type="displayed"/>
    </isoform>
    <isoform>
        <id>Q5JTC6-2</id>
        <name>2</name>
        <name>Amer1-S2</name>
        <name>Short</name>
        <sequence type="described" ref="VSP_024091 VSP_024092"/>
    </isoform>
</comment>
<comment type="tissue specificity">
    <text evidence="6">Detected in fetal and adult kidney, brain and spleen.</text>
</comment>
<comment type="disease" evidence="5">
    <disease id="DI-02547">
        <name>Osteopathia striata with cranial sclerosis</name>
        <acronym>OSCS</acronym>
        <description>An X-linked dominant sclerosing bone dysplasia that presents in females with macrocephaly, cleft palate, facial palsy, conductive hearing loss, mild learning disabilities, sclerosis of the long bones and skull. Longitudinal striations are visible on radiographs of the long bones, pelvis, and scapulae (osteopathia striata). In males this entity is usually associated with fetal or neonatal lethality. Occasional surviving males have, in addition to hyperostosis, cardiac, intestinal, and genitourinary malformations.</description>
        <dbReference type="MIM" id="300373"/>
    </disease>
    <text>The disease is caused by variants affecting the gene represented in this entry.</text>
</comment>
<comment type="miscellaneous">
    <text>Inactivated in approximately one-third of Wilms tumors.</text>
</comment>
<comment type="similarity">
    <text evidence="11">Belongs to the Amer family.</text>
</comment>
<comment type="online information" name="Atlas of Genetics and Cytogenetics in Oncology and Haematology">
    <link uri="https://atlasgeneticsoncology.org/gene/44119/FAM123B"/>
</comment>
<name>AMER1_HUMAN</name>
<accession>Q5JTC6</accession>
<accession>A2IB86</accession>
<accession>Q8N885</accession>
<evidence type="ECO:0000256" key="1">
    <source>
        <dbReference type="SAM" id="MobiDB-lite"/>
    </source>
</evidence>
<evidence type="ECO:0000269" key="2">
    <source>
    </source>
</evidence>
<evidence type="ECO:0000269" key="3">
    <source>
    </source>
</evidence>
<evidence type="ECO:0000269" key="4">
    <source>
    </source>
</evidence>
<evidence type="ECO:0000269" key="5">
    <source>
    </source>
</evidence>
<evidence type="ECO:0000269" key="6">
    <source>
    </source>
</evidence>
<evidence type="ECO:0000269" key="7">
    <source>
    </source>
</evidence>
<evidence type="ECO:0000269" key="8">
    <source>
    </source>
</evidence>
<evidence type="ECO:0000269" key="9">
    <source>
    </source>
</evidence>
<evidence type="ECO:0000303" key="10">
    <source>
    </source>
</evidence>
<evidence type="ECO:0000305" key="11"/>
<evidence type="ECO:0007744" key="12">
    <source>
    </source>
</evidence>
<evidence type="ECO:0007744" key="13">
    <source>
    </source>
</evidence>
<evidence type="ECO:0007744" key="14">
    <source>
    </source>
</evidence>
<sequence length="1135" mass="124029">METQKDEAAQAKGAAASGSTREQTAEKGAKNKAAEATEGPTSEPSSSGPGRLKKTAMKLFGGKKGICTLPSFFGGGRSKGSGKGSSKKGLSKSKTHDGLSEAAHGPEDVVSEGTGFSLPLPELPCQFPSSQSAHGALETGSRCKTSVAGATEKAVAEKFPSMPKPKKGLKGFFSSIRRHRKSKVTGAEQSEPGAKGPERVRARPHEHVSSAPQVPCFEETFQAPRKENANPQDAPGPKVSPTPEPSPPATEKMACKDPEKPMEACASAHVQPKPAPEASSLEEPHSPETGEKVVAGEVNPPNGPVGDPLSLLFGDVTSLKSFDSLTGCGDIIAEQDMDSMTDSMASGGQRANRDGTKRSSCLVTYQGGGEEMALPDDDDEEEEEEEEVELEEEEEEVKEEEEDDDLEYLWETAQMYPRPNMNLGYHPTTSPGHHGYMLLDPVRSYPGLAPGELLTPQSDQQESAPNSDEGYYDSTTPGFEDDSGEALGLVRRDCLPRDSYSGDALYEFYEPDDSLENSPPGDDCLYDLHGRSSEMFDPFLNFEPFLSSRPPGAMETEEERLVTIQKQLLYWELRREQLEAQEARAREAHAREAHAREAYTREAYGREAYAREAHTWEAHGREARTREAQAREVRCRETQVRETQARQEKPVLEYQMRPLGPSVMGLAAGVSGTSQISHRGITSAFPTTASSEPDWRDFRPLEKRYEGTCSKKDQSTCLMQLFQSDAMFEPDMQEANFGGSPRRAYPTYSPPEDPEEEEVEKEGNATVSFSQALVEFTSNGNLFSSMSCSSDSDSSFTQNLPELPPMVTFDIADVERDGEGKCEENPEFHNDEDLAASLEAFELGYYHKHAFNNYHSRFYQGLPWGVSSLPRYLGLPGLHPRPPPAAMALNRRSRSLDTAETLEMELSNSHLVQGYLESDELQAQQEDSDEEDEEEEEGEWSRDSPLSLYTEPPGAYDWPAWAPCPLPVGPGPAWISPNQLDRPSSQSPYRQATCCIPPMTMSISLSVPESRAPGESGPQLARPSHLHLPMGPCYNLQPQASQSMRARPRDVLLPVDEPSCSSSSGGFSPSPLPQAKPVGITHGIPQLPRVRPEHPQPQPTHYGPSSLDLSKERAEQGASLATSYSSTAMNGNLAK</sequence>
<keyword id="KW-0002">3D-structure</keyword>
<keyword id="KW-0007">Acetylation</keyword>
<keyword id="KW-0025">Alternative splicing</keyword>
<keyword id="KW-1003">Cell membrane</keyword>
<keyword id="KW-0963">Cytoplasm</keyword>
<keyword id="KW-0446">Lipid-binding</keyword>
<keyword id="KW-0472">Membrane</keyword>
<keyword id="KW-0539">Nucleus</keyword>
<keyword id="KW-0597">Phosphoprotein</keyword>
<keyword id="KW-1267">Proteomics identification</keyword>
<keyword id="KW-1185">Reference proteome</keyword>
<keyword id="KW-0879">Wnt signaling pathway</keyword>
<protein>
    <recommendedName>
        <fullName>APC membrane recruitment protein 1</fullName>
        <shortName>Amer1</shortName>
    </recommendedName>
    <alternativeName>
        <fullName>Protein FAM123B</fullName>
    </alternativeName>
    <alternativeName>
        <fullName>Wilms tumor gene on the X chromosome protein</fullName>
    </alternativeName>
</protein>
<gene>
    <name type="primary">AMER1</name>
    <name type="synonym">FAM123B</name>
    <name type="synonym">WTX</name>
</gene>
<proteinExistence type="evidence at protein level"/>
<reference key="1">
    <citation type="journal article" date="2007" name="Science">
        <title>An X chromosome gene, WTX, is commonly inactivated in Wilms tumor.</title>
        <authorList>
            <person name="Rivera M.N."/>
            <person name="Kim W.J."/>
            <person name="Wells J."/>
            <person name="Driscoll D.R."/>
            <person name="Brannigan B.W."/>
            <person name="Han M."/>
            <person name="Kim J.C."/>
            <person name="Feinberg A.P."/>
            <person name="Gerald W.L."/>
            <person name="Vargas S.O."/>
            <person name="Chin L."/>
            <person name="Iafrate A.J."/>
            <person name="Bell D.W."/>
            <person name="Haber D.A."/>
        </authorList>
    </citation>
    <scope>NUCLEOTIDE SEQUENCE [MRNA] (ISOFORM 1)</scope>
    <scope>VARIANT ASN-292</scope>
    <scope>INACTIVATION IN WILMS TUMOR</scope>
</reference>
<reference key="2">
    <citation type="journal article" date="2004" name="Nat. Genet.">
        <title>Complete sequencing and characterization of 21,243 full-length human cDNAs.</title>
        <authorList>
            <person name="Ota T."/>
            <person name="Suzuki Y."/>
            <person name="Nishikawa T."/>
            <person name="Otsuki T."/>
            <person name="Sugiyama T."/>
            <person name="Irie R."/>
            <person name="Wakamatsu A."/>
            <person name="Hayashi K."/>
            <person name="Sato H."/>
            <person name="Nagai K."/>
            <person name="Kimura K."/>
            <person name="Makita H."/>
            <person name="Sekine M."/>
            <person name="Obayashi M."/>
            <person name="Nishi T."/>
            <person name="Shibahara T."/>
            <person name="Tanaka T."/>
            <person name="Ishii S."/>
            <person name="Yamamoto J."/>
            <person name="Saito K."/>
            <person name="Kawai Y."/>
            <person name="Isono Y."/>
            <person name="Nakamura Y."/>
            <person name="Nagahari K."/>
            <person name="Murakami K."/>
            <person name="Yasuda T."/>
            <person name="Iwayanagi T."/>
            <person name="Wagatsuma M."/>
            <person name="Shiratori A."/>
            <person name="Sudo H."/>
            <person name="Hosoiri T."/>
            <person name="Kaku Y."/>
            <person name="Kodaira H."/>
            <person name="Kondo H."/>
            <person name="Sugawara M."/>
            <person name="Takahashi M."/>
            <person name="Kanda K."/>
            <person name="Yokoi T."/>
            <person name="Furuya T."/>
            <person name="Kikkawa E."/>
            <person name="Omura Y."/>
            <person name="Abe K."/>
            <person name="Kamihara K."/>
            <person name="Katsuta N."/>
            <person name="Sato K."/>
            <person name="Tanikawa M."/>
            <person name="Yamazaki M."/>
            <person name="Ninomiya K."/>
            <person name="Ishibashi T."/>
            <person name="Yamashita H."/>
            <person name="Murakawa K."/>
            <person name="Fujimori K."/>
            <person name="Tanai H."/>
            <person name="Kimata M."/>
            <person name="Watanabe M."/>
            <person name="Hiraoka S."/>
            <person name="Chiba Y."/>
            <person name="Ishida S."/>
            <person name="Ono Y."/>
            <person name="Takiguchi S."/>
            <person name="Watanabe S."/>
            <person name="Yosida M."/>
            <person name="Hotuta T."/>
            <person name="Kusano J."/>
            <person name="Kanehori K."/>
            <person name="Takahashi-Fujii A."/>
            <person name="Hara H."/>
            <person name="Tanase T.-O."/>
            <person name="Nomura Y."/>
            <person name="Togiya S."/>
            <person name="Komai F."/>
            <person name="Hara R."/>
            <person name="Takeuchi K."/>
            <person name="Arita M."/>
            <person name="Imose N."/>
            <person name="Musashino K."/>
            <person name="Yuuki H."/>
            <person name="Oshima A."/>
            <person name="Sasaki N."/>
            <person name="Aotsuka S."/>
            <person name="Yoshikawa Y."/>
            <person name="Matsunawa H."/>
            <person name="Ichihara T."/>
            <person name="Shiohata N."/>
            <person name="Sano S."/>
            <person name="Moriya S."/>
            <person name="Momiyama H."/>
            <person name="Satoh N."/>
            <person name="Takami S."/>
            <person name="Terashima Y."/>
            <person name="Suzuki O."/>
            <person name="Nakagawa S."/>
            <person name="Senoh A."/>
            <person name="Mizoguchi H."/>
            <person name="Goto Y."/>
            <person name="Shimizu F."/>
            <person name="Wakebe H."/>
            <person name="Hishigaki H."/>
            <person name="Watanabe T."/>
            <person name="Sugiyama A."/>
            <person name="Takemoto M."/>
            <person name="Kawakami B."/>
            <person name="Yamazaki M."/>
            <person name="Watanabe K."/>
            <person name="Kumagai A."/>
            <person name="Itakura S."/>
            <person name="Fukuzumi Y."/>
            <person name="Fujimori Y."/>
            <person name="Komiyama M."/>
            <person name="Tashiro H."/>
            <person name="Tanigami A."/>
            <person name="Fujiwara T."/>
            <person name="Ono T."/>
            <person name="Yamada K."/>
            <person name="Fujii Y."/>
            <person name="Ozaki K."/>
            <person name="Hirao M."/>
            <person name="Ohmori Y."/>
            <person name="Kawabata A."/>
            <person name="Hikiji T."/>
            <person name="Kobatake N."/>
            <person name="Inagaki H."/>
            <person name="Ikema Y."/>
            <person name="Okamoto S."/>
            <person name="Okitani R."/>
            <person name="Kawakami T."/>
            <person name="Noguchi S."/>
            <person name="Itoh T."/>
            <person name="Shigeta K."/>
            <person name="Senba T."/>
            <person name="Matsumura K."/>
            <person name="Nakajima Y."/>
            <person name="Mizuno T."/>
            <person name="Morinaga M."/>
            <person name="Sasaki M."/>
            <person name="Togashi T."/>
            <person name="Oyama M."/>
            <person name="Hata H."/>
            <person name="Watanabe M."/>
            <person name="Komatsu T."/>
            <person name="Mizushima-Sugano J."/>
            <person name="Satoh T."/>
            <person name="Shirai Y."/>
            <person name="Takahashi Y."/>
            <person name="Nakagawa K."/>
            <person name="Okumura K."/>
            <person name="Nagase T."/>
            <person name="Nomura N."/>
            <person name="Kikuchi H."/>
            <person name="Masuho Y."/>
            <person name="Yamashita R."/>
            <person name="Nakai K."/>
            <person name="Yada T."/>
            <person name="Nakamura Y."/>
            <person name="Ohara O."/>
            <person name="Isogai T."/>
            <person name="Sugano S."/>
        </authorList>
    </citation>
    <scope>NUCLEOTIDE SEQUENCE [LARGE SCALE MRNA] (ISOFORM 2)</scope>
    <source>
        <tissue>Spleen</tissue>
    </source>
</reference>
<reference key="3">
    <citation type="journal article" date="2005" name="Nature">
        <title>The DNA sequence of the human X chromosome.</title>
        <authorList>
            <person name="Ross M.T."/>
            <person name="Grafham D.V."/>
            <person name="Coffey A.J."/>
            <person name="Scherer S."/>
            <person name="McLay K."/>
            <person name="Muzny D."/>
            <person name="Platzer M."/>
            <person name="Howell G.R."/>
            <person name="Burrows C."/>
            <person name="Bird C.P."/>
            <person name="Frankish A."/>
            <person name="Lovell F.L."/>
            <person name="Howe K.L."/>
            <person name="Ashurst J.L."/>
            <person name="Fulton R.S."/>
            <person name="Sudbrak R."/>
            <person name="Wen G."/>
            <person name="Jones M.C."/>
            <person name="Hurles M.E."/>
            <person name="Andrews T.D."/>
            <person name="Scott C.E."/>
            <person name="Searle S."/>
            <person name="Ramser J."/>
            <person name="Whittaker A."/>
            <person name="Deadman R."/>
            <person name="Carter N.P."/>
            <person name="Hunt S.E."/>
            <person name="Chen R."/>
            <person name="Cree A."/>
            <person name="Gunaratne P."/>
            <person name="Havlak P."/>
            <person name="Hodgson A."/>
            <person name="Metzker M.L."/>
            <person name="Richards S."/>
            <person name="Scott G."/>
            <person name="Steffen D."/>
            <person name="Sodergren E."/>
            <person name="Wheeler D.A."/>
            <person name="Worley K.C."/>
            <person name="Ainscough R."/>
            <person name="Ambrose K.D."/>
            <person name="Ansari-Lari M.A."/>
            <person name="Aradhya S."/>
            <person name="Ashwell R.I."/>
            <person name="Babbage A.K."/>
            <person name="Bagguley C.L."/>
            <person name="Ballabio A."/>
            <person name="Banerjee R."/>
            <person name="Barker G.E."/>
            <person name="Barlow K.F."/>
            <person name="Barrett I.P."/>
            <person name="Bates K.N."/>
            <person name="Beare D.M."/>
            <person name="Beasley H."/>
            <person name="Beasley O."/>
            <person name="Beck A."/>
            <person name="Bethel G."/>
            <person name="Blechschmidt K."/>
            <person name="Brady N."/>
            <person name="Bray-Allen S."/>
            <person name="Bridgeman A.M."/>
            <person name="Brown A.J."/>
            <person name="Brown M.J."/>
            <person name="Bonnin D."/>
            <person name="Bruford E.A."/>
            <person name="Buhay C."/>
            <person name="Burch P."/>
            <person name="Burford D."/>
            <person name="Burgess J."/>
            <person name="Burrill W."/>
            <person name="Burton J."/>
            <person name="Bye J.M."/>
            <person name="Carder C."/>
            <person name="Carrel L."/>
            <person name="Chako J."/>
            <person name="Chapman J.C."/>
            <person name="Chavez D."/>
            <person name="Chen E."/>
            <person name="Chen G."/>
            <person name="Chen Y."/>
            <person name="Chen Z."/>
            <person name="Chinault C."/>
            <person name="Ciccodicola A."/>
            <person name="Clark S.Y."/>
            <person name="Clarke G."/>
            <person name="Clee C.M."/>
            <person name="Clegg S."/>
            <person name="Clerc-Blankenburg K."/>
            <person name="Clifford K."/>
            <person name="Cobley V."/>
            <person name="Cole C.G."/>
            <person name="Conquer J.S."/>
            <person name="Corby N."/>
            <person name="Connor R.E."/>
            <person name="David R."/>
            <person name="Davies J."/>
            <person name="Davis C."/>
            <person name="Davis J."/>
            <person name="Delgado O."/>
            <person name="Deshazo D."/>
            <person name="Dhami P."/>
            <person name="Ding Y."/>
            <person name="Dinh H."/>
            <person name="Dodsworth S."/>
            <person name="Draper H."/>
            <person name="Dugan-Rocha S."/>
            <person name="Dunham A."/>
            <person name="Dunn M."/>
            <person name="Durbin K.J."/>
            <person name="Dutta I."/>
            <person name="Eades T."/>
            <person name="Ellwood M."/>
            <person name="Emery-Cohen A."/>
            <person name="Errington H."/>
            <person name="Evans K.L."/>
            <person name="Faulkner L."/>
            <person name="Francis F."/>
            <person name="Frankland J."/>
            <person name="Fraser A.E."/>
            <person name="Galgoczy P."/>
            <person name="Gilbert J."/>
            <person name="Gill R."/>
            <person name="Gloeckner G."/>
            <person name="Gregory S.G."/>
            <person name="Gribble S."/>
            <person name="Griffiths C."/>
            <person name="Grocock R."/>
            <person name="Gu Y."/>
            <person name="Gwilliam R."/>
            <person name="Hamilton C."/>
            <person name="Hart E.A."/>
            <person name="Hawes A."/>
            <person name="Heath P.D."/>
            <person name="Heitmann K."/>
            <person name="Hennig S."/>
            <person name="Hernandez J."/>
            <person name="Hinzmann B."/>
            <person name="Ho S."/>
            <person name="Hoffs M."/>
            <person name="Howden P.J."/>
            <person name="Huckle E.J."/>
            <person name="Hume J."/>
            <person name="Hunt P.J."/>
            <person name="Hunt A.R."/>
            <person name="Isherwood J."/>
            <person name="Jacob L."/>
            <person name="Johnson D."/>
            <person name="Jones S."/>
            <person name="de Jong P.J."/>
            <person name="Joseph S.S."/>
            <person name="Keenan S."/>
            <person name="Kelly S."/>
            <person name="Kershaw J.K."/>
            <person name="Khan Z."/>
            <person name="Kioschis P."/>
            <person name="Klages S."/>
            <person name="Knights A.J."/>
            <person name="Kosiura A."/>
            <person name="Kovar-Smith C."/>
            <person name="Laird G.K."/>
            <person name="Langford C."/>
            <person name="Lawlor S."/>
            <person name="Leversha M."/>
            <person name="Lewis L."/>
            <person name="Liu W."/>
            <person name="Lloyd C."/>
            <person name="Lloyd D.M."/>
            <person name="Loulseged H."/>
            <person name="Loveland J.E."/>
            <person name="Lovell J.D."/>
            <person name="Lozado R."/>
            <person name="Lu J."/>
            <person name="Lyne R."/>
            <person name="Ma J."/>
            <person name="Maheshwari M."/>
            <person name="Matthews L.H."/>
            <person name="McDowall J."/>
            <person name="McLaren S."/>
            <person name="McMurray A."/>
            <person name="Meidl P."/>
            <person name="Meitinger T."/>
            <person name="Milne S."/>
            <person name="Miner G."/>
            <person name="Mistry S.L."/>
            <person name="Morgan M."/>
            <person name="Morris S."/>
            <person name="Mueller I."/>
            <person name="Mullikin J.C."/>
            <person name="Nguyen N."/>
            <person name="Nordsiek G."/>
            <person name="Nyakatura G."/>
            <person name="O'dell C.N."/>
            <person name="Okwuonu G."/>
            <person name="Palmer S."/>
            <person name="Pandian R."/>
            <person name="Parker D."/>
            <person name="Parrish J."/>
            <person name="Pasternak S."/>
            <person name="Patel D."/>
            <person name="Pearce A.V."/>
            <person name="Pearson D.M."/>
            <person name="Pelan S.E."/>
            <person name="Perez L."/>
            <person name="Porter K.M."/>
            <person name="Ramsey Y."/>
            <person name="Reichwald K."/>
            <person name="Rhodes S."/>
            <person name="Ridler K.A."/>
            <person name="Schlessinger D."/>
            <person name="Schueler M.G."/>
            <person name="Sehra H.K."/>
            <person name="Shaw-Smith C."/>
            <person name="Shen H."/>
            <person name="Sheridan E.M."/>
            <person name="Shownkeen R."/>
            <person name="Skuce C.D."/>
            <person name="Smith M.L."/>
            <person name="Sotheran E.C."/>
            <person name="Steingruber H.E."/>
            <person name="Steward C.A."/>
            <person name="Storey R."/>
            <person name="Swann R.M."/>
            <person name="Swarbreck D."/>
            <person name="Tabor P.E."/>
            <person name="Taudien S."/>
            <person name="Taylor T."/>
            <person name="Teague B."/>
            <person name="Thomas K."/>
            <person name="Thorpe A."/>
            <person name="Timms K."/>
            <person name="Tracey A."/>
            <person name="Trevanion S."/>
            <person name="Tromans A.C."/>
            <person name="d'Urso M."/>
            <person name="Verduzco D."/>
            <person name="Villasana D."/>
            <person name="Waldron L."/>
            <person name="Wall M."/>
            <person name="Wang Q."/>
            <person name="Warren J."/>
            <person name="Warry G.L."/>
            <person name="Wei X."/>
            <person name="West A."/>
            <person name="Whitehead S.L."/>
            <person name="Whiteley M.N."/>
            <person name="Wilkinson J.E."/>
            <person name="Willey D.L."/>
            <person name="Williams G."/>
            <person name="Williams L."/>
            <person name="Williamson A."/>
            <person name="Williamson H."/>
            <person name="Wilming L."/>
            <person name="Woodmansey R.L."/>
            <person name="Wray P.W."/>
            <person name="Yen J."/>
            <person name="Zhang J."/>
            <person name="Zhou J."/>
            <person name="Zoghbi H."/>
            <person name="Zorilla S."/>
            <person name="Buck D."/>
            <person name="Reinhardt R."/>
            <person name="Poustka A."/>
            <person name="Rosenthal A."/>
            <person name="Lehrach H."/>
            <person name="Meindl A."/>
            <person name="Minx P.J."/>
            <person name="Hillier L.W."/>
            <person name="Willard H.F."/>
            <person name="Wilson R.K."/>
            <person name="Waterston R.H."/>
            <person name="Rice C.M."/>
            <person name="Vaudin M."/>
            <person name="Coulson A."/>
            <person name="Nelson D.L."/>
            <person name="Weinstock G."/>
            <person name="Sulston J.E."/>
            <person name="Durbin R.M."/>
            <person name="Hubbard T."/>
            <person name="Gibbs R.A."/>
            <person name="Beck S."/>
            <person name="Rogers J."/>
            <person name="Bentley D.R."/>
        </authorList>
    </citation>
    <scope>NUCLEOTIDE SEQUENCE [LARGE SCALE GENOMIC DNA]</scope>
</reference>
<reference key="4">
    <citation type="journal article" date="2007" name="Science">
        <title>Wilms tumor suppressor WTX negatively regulates WNT/beta-catenin signaling.</title>
        <authorList>
            <person name="Major M.B."/>
            <person name="Camp N.D."/>
            <person name="Berndt J.D."/>
            <person name="Yi X."/>
            <person name="Goldenberg S.J."/>
            <person name="Hubbert C."/>
            <person name="Biechele T.L."/>
            <person name="Gingras A.-C."/>
            <person name="Zheng N."/>
            <person name="Maccoss M.J."/>
            <person name="Angers S."/>
            <person name="Moon R.T."/>
        </authorList>
    </citation>
    <scope>FUNCTION</scope>
    <scope>SUBCELLULAR LOCATION</scope>
    <scope>IDENTIFICATION BY MASS SPECTROMETRY</scope>
    <scope>INTERACTION WITH CTNNB1; KEAP1; AXIN1; APC; FBXW11 AND BTRC</scope>
</reference>
<reference key="5">
    <citation type="journal article" date="2008" name="Proc. Natl. Acad. Sci. U.S.A.">
        <title>A quantitative atlas of mitotic phosphorylation.</title>
        <authorList>
            <person name="Dephoure N."/>
            <person name="Zhou C."/>
            <person name="Villen J."/>
            <person name="Beausoleil S.A."/>
            <person name="Bakalarski C.E."/>
            <person name="Elledge S.J."/>
            <person name="Gygi S.P."/>
        </authorList>
    </citation>
    <scope>PHOSPHORYLATION [LARGE SCALE ANALYSIS] AT SER-246</scope>
    <scope>IDENTIFICATION BY MASS SPECTROMETRY [LARGE SCALE ANALYSIS]</scope>
    <source>
        <tissue>Cervix carcinoma</tissue>
    </source>
</reference>
<reference key="6">
    <citation type="journal article" date="2009" name="Anal. Chem.">
        <title>Lys-N and trypsin cover complementary parts of the phosphoproteome in a refined SCX-based approach.</title>
        <authorList>
            <person name="Gauci S."/>
            <person name="Helbig A.O."/>
            <person name="Slijper M."/>
            <person name="Krijgsveld J."/>
            <person name="Heck A.J."/>
            <person name="Mohammed S."/>
        </authorList>
    </citation>
    <scope>IDENTIFICATION BY MASS SPECTROMETRY [LARGE SCALE ANALYSIS]</scope>
</reference>
<reference key="7">
    <citation type="journal article" date="2009" name="Nat. Genet.">
        <title>Germline mutations in WTX cause a sclerosing skeletal dysplasia but do not predispose to tumorigenesis.</title>
        <authorList>
            <person name="Jenkins Z.A."/>
            <person name="van Kogelenberg M."/>
            <person name="Morgan T."/>
            <person name="Jeffs A."/>
            <person name="Fukuzawa R."/>
            <person name="Pearl E."/>
            <person name="Thaller C."/>
            <person name="Hing A.V."/>
            <person name="Porteous M.E."/>
            <person name="Garcia-Minaur S."/>
            <person name="Bohring A."/>
            <person name="Lacombe D."/>
            <person name="Stewart F."/>
            <person name="Fiskerstrand T."/>
            <person name="Bindoff L."/>
            <person name="Berland S."/>
            <person name="Ades L.C."/>
            <person name="Tchan M."/>
            <person name="David A."/>
            <person name="Wilson L.C."/>
            <person name="Hennekam R.C."/>
            <person name="Donnai D."/>
            <person name="Mansour S."/>
            <person name="Cormier-Daire V."/>
            <person name="Robertson S.P."/>
        </authorList>
    </citation>
    <scope>INVOLVEMENT IN OSCS</scope>
</reference>
<reference key="8">
    <citation type="journal article" date="2007" name="J. Cell Sci.">
        <title>AMER1 regulates the distribution of the tumor suppressor APC between microtubules and the plasma membrane.</title>
        <authorList>
            <person name="Grohmann A."/>
            <person name="Tanneberger K."/>
            <person name="Alzner A."/>
            <person name="Schneikert J."/>
            <person name="Behrens J."/>
        </authorList>
    </citation>
    <scope>FUNCTION</scope>
    <scope>SUBCELLULAR LOCATION</scope>
    <scope>PTDINS(4,5)P2-BINDING</scope>
    <scope>INTERACTION WITH APC</scope>
</reference>
<reference key="9">
    <citation type="journal article" date="2009" name="Proc. Natl. Acad. Sci. U.S.A.">
        <title>The tumor suppressor WTX shuttles to the nucleus and modulates WT1 activity.</title>
        <authorList>
            <person name="Rivera M.N."/>
            <person name="Kim W.J."/>
            <person name="Wells J."/>
            <person name="Stone A."/>
            <person name="Burger A."/>
            <person name="Coffman E.J."/>
            <person name="Zhang J."/>
            <person name="Haber D.A."/>
        </authorList>
    </citation>
    <scope>FUNCTION</scope>
    <scope>ALTERNATIVE SPLICING</scope>
    <scope>INTERACTION WITH WT1</scope>
    <scope>SUBCELLULAR LOCATION</scope>
    <scope>TISSUE SPECIFICITY</scope>
</reference>
<reference key="10">
    <citation type="journal article" date="2010" name="BMC Evol. Biol.">
        <title>The WTX/AMER1 gene family: evolution, signature and function.</title>
        <authorList>
            <person name="Boutet A."/>
            <person name="Comai G."/>
            <person name="Schedl A."/>
        </authorList>
    </citation>
    <scope>GENE FAMILY</scope>
</reference>
<reference key="11">
    <citation type="journal article" date="2011" name="EMBO J.">
        <title>Amer1/WTX couples Wnt-induced formation of PtdIns(4,5)P2 to LRP6 phosphorylation.</title>
        <authorList>
            <person name="Tanneberger K."/>
            <person name="Pfister A.S."/>
            <person name="Brauburger K."/>
            <person name="Schneikert J."/>
            <person name="Hadjihannas M.V."/>
            <person name="Kriz V."/>
            <person name="Schulte G."/>
            <person name="Bryja V."/>
            <person name="Behrens J."/>
        </authorList>
    </citation>
    <scope>FUNCTION</scope>
    <scope>SUBCELLULAR LOCATION</scope>
    <scope>PTDINS(4,5)P2-BINDING</scope>
    <scope>INTERACTION WITH LRP6</scope>
    <scope>MUTAGENESIS OF LYS-54; LYS-58; LYS-79; LYS-83; LYS-166; LYS-181 AND LYS-183</scope>
</reference>
<reference key="12">
    <citation type="journal article" date="2011" name="J. Biol. Chem.">
        <title>Structural and functional characterization of the Wnt inhibitor APC membrane recruitment 1 (Amer1).</title>
        <authorList>
            <person name="Tanneberger K."/>
            <person name="Pfister A.S."/>
            <person name="Kriz V."/>
            <person name="Bryja V."/>
            <person name="Schambony A."/>
            <person name="Behrens J."/>
        </authorList>
    </citation>
    <scope>FUNCTION</scope>
    <scope>SUBCELLULAR LOCATION</scope>
    <scope>INTERACTION WITH CTNNB1</scope>
</reference>
<reference key="13">
    <citation type="journal article" date="2012" name="Proc. Natl. Acad. Sci. U.S.A.">
        <title>N-terminal acetylome analyses and functional insights of the N-terminal acetyltransferase NatB.</title>
        <authorList>
            <person name="Van Damme P."/>
            <person name="Lasa M."/>
            <person name="Polevoda B."/>
            <person name="Gazquez C."/>
            <person name="Elosegui-Artola A."/>
            <person name="Kim D.S."/>
            <person name="De Juan-Pardo E."/>
            <person name="Demeyer K."/>
            <person name="Hole K."/>
            <person name="Larrea E."/>
            <person name="Timmerman E."/>
            <person name="Prieto J."/>
            <person name="Arnesen T."/>
            <person name="Sherman F."/>
            <person name="Gevaert K."/>
            <person name="Aldabe R."/>
        </authorList>
    </citation>
    <scope>ACETYLATION [LARGE SCALE ANALYSIS] AT MET-1</scope>
    <scope>IDENTIFICATION BY MASS SPECTROMETRY [LARGE SCALE ANALYSIS]</scope>
</reference>
<reference key="14">
    <citation type="journal article" date="2013" name="J. Proteome Res.">
        <title>Toward a comprehensive characterization of a human cancer cell phosphoproteome.</title>
        <authorList>
            <person name="Zhou H."/>
            <person name="Di Palma S."/>
            <person name="Preisinger C."/>
            <person name="Peng M."/>
            <person name="Polat A.N."/>
            <person name="Heck A.J."/>
            <person name="Mohammed S."/>
        </authorList>
    </citation>
    <scope>PHOSPHORYLATION [LARGE SCALE ANALYSIS] AT SER-246</scope>
    <scope>IDENTIFICATION BY MASS SPECTROMETRY [LARGE SCALE ANALYSIS]</scope>
    <source>
        <tissue>Cervix carcinoma</tissue>
    </source>
</reference>
<reference key="15">
    <citation type="journal article" date="2014" name="J. Proteomics">
        <title>An enzyme assisted RP-RPLC approach for in-depth analysis of human liver phosphoproteome.</title>
        <authorList>
            <person name="Bian Y."/>
            <person name="Song C."/>
            <person name="Cheng K."/>
            <person name="Dong M."/>
            <person name="Wang F."/>
            <person name="Huang J."/>
            <person name="Sun D."/>
            <person name="Wang L."/>
            <person name="Ye M."/>
            <person name="Zou H."/>
        </authorList>
    </citation>
    <scope>IDENTIFICATION BY MASS SPECTROMETRY [LARGE SCALE ANALYSIS]</scope>
    <source>
        <tissue>Liver</tissue>
    </source>
</reference>
<reference key="16">
    <citation type="journal article" date="2012" name="Transl. Psychiatry">
        <title>Analysis of the chromosome X exome in patients with autism spectrum disorders identified novel candidate genes, including TMLHE.</title>
        <authorList>
            <person name="Nava C."/>
            <person name="Lamari F."/>
            <person name="Heron D."/>
            <person name="Mignot C."/>
            <person name="Rastetter A."/>
            <person name="Keren B."/>
            <person name="Cohen D."/>
            <person name="Faudet A."/>
            <person name="Bouteiller D."/>
            <person name="Gilleron M."/>
            <person name="Jacquette A."/>
            <person name="Whalen S."/>
            <person name="Afenjar A."/>
            <person name="Perisse D."/>
            <person name="Laurent C."/>
            <person name="Dupuits C."/>
            <person name="Gautier C."/>
            <person name="Gerard M."/>
            <person name="Huguet G."/>
            <person name="Caillet S."/>
            <person name="Leheup B."/>
            <person name="Leboyer M."/>
            <person name="Gillberg C."/>
            <person name="Delorme R."/>
            <person name="Bourgeron T."/>
            <person name="Brice A."/>
            <person name="Depienne C."/>
        </authorList>
    </citation>
    <scope>VARIANT CYS-178</scope>
</reference>
<organism>
    <name type="scientific">Homo sapiens</name>
    <name type="common">Human</name>
    <dbReference type="NCBI Taxonomy" id="9606"/>
    <lineage>
        <taxon>Eukaryota</taxon>
        <taxon>Metazoa</taxon>
        <taxon>Chordata</taxon>
        <taxon>Craniata</taxon>
        <taxon>Vertebrata</taxon>
        <taxon>Euteleostomi</taxon>
        <taxon>Mammalia</taxon>
        <taxon>Eutheria</taxon>
        <taxon>Euarchontoglires</taxon>
        <taxon>Primates</taxon>
        <taxon>Haplorrhini</taxon>
        <taxon>Catarrhini</taxon>
        <taxon>Hominidae</taxon>
        <taxon>Homo</taxon>
    </lineage>
</organism>